<protein>
    <recommendedName>
        <fullName>Signal peptidase I</fullName>
        <shortName>SPase I</shortName>
        <ecNumber>3.4.21.89</ecNumber>
    </recommendedName>
    <alternativeName>
        <fullName>Leader peptidase I</fullName>
    </alternativeName>
</protein>
<proteinExistence type="inferred from homology"/>
<sequence length="290" mass="33710">MKFLRSVYAFCSSWVGTIVIVLLVIFFIAQAFIIPSRSMVGTLYEGDMLFVKKFSYGIPIPKIPWIELPVMPDFKNNGHLIEGDRPKRGEVVVFIPPHEKKSYYVKRNFAIGGDEVLFTNEGFYLHPFESDTDKNYIAKHYPNAMTKEFMGKIFVLNPYKNEHPGIHYQKDNETFHLMEQLATQGAEANISMQLIQMEGEKVFYKKINDDEFFMIGDNRDNSSDSRFWGSVAYKNIVGSPWFVYFSLSLKNSLEMDAENNPKKRYLVRWERMFKSVGGLEKIIKKENATH</sequence>
<name>LEP_HELPY</name>
<accession>O25300</accession>
<reference key="1">
    <citation type="journal article" date="1997" name="Nature">
        <title>The complete genome sequence of the gastric pathogen Helicobacter pylori.</title>
        <authorList>
            <person name="Tomb J.-F."/>
            <person name="White O."/>
            <person name="Kerlavage A.R."/>
            <person name="Clayton R.A."/>
            <person name="Sutton G.G."/>
            <person name="Fleischmann R.D."/>
            <person name="Ketchum K.A."/>
            <person name="Klenk H.-P."/>
            <person name="Gill S.R."/>
            <person name="Dougherty B.A."/>
            <person name="Nelson K.E."/>
            <person name="Quackenbush J."/>
            <person name="Zhou L."/>
            <person name="Kirkness E.F."/>
            <person name="Peterson S.N."/>
            <person name="Loftus B.J."/>
            <person name="Richardson D.L."/>
            <person name="Dodson R.J."/>
            <person name="Khalak H.G."/>
            <person name="Glodek A."/>
            <person name="McKenney K."/>
            <person name="FitzGerald L.M."/>
            <person name="Lee N."/>
            <person name="Adams M.D."/>
            <person name="Hickey E.K."/>
            <person name="Berg D.E."/>
            <person name="Gocayne J.D."/>
            <person name="Utterback T.R."/>
            <person name="Peterson J.D."/>
            <person name="Kelley J.M."/>
            <person name="Cotton M.D."/>
            <person name="Weidman J.F."/>
            <person name="Fujii C."/>
            <person name="Bowman C."/>
            <person name="Watthey L."/>
            <person name="Wallin E."/>
            <person name="Hayes W.S."/>
            <person name="Borodovsky M."/>
            <person name="Karp P.D."/>
            <person name="Smith H.O."/>
            <person name="Fraser C.M."/>
            <person name="Venter J.C."/>
        </authorList>
    </citation>
    <scope>NUCLEOTIDE SEQUENCE [LARGE SCALE GENOMIC DNA]</scope>
    <source>
        <strain>ATCC 700392 / 26695</strain>
    </source>
</reference>
<gene>
    <name type="primary">lepB</name>
    <name type="ordered locus">HP_0576</name>
</gene>
<dbReference type="EC" id="3.4.21.89"/>
<dbReference type="EMBL" id="AE000511">
    <property type="protein sequence ID" value="AAD07643.1"/>
    <property type="molecule type" value="Genomic_DNA"/>
</dbReference>
<dbReference type="PIR" id="H64591">
    <property type="entry name" value="H64591"/>
</dbReference>
<dbReference type="RefSeq" id="NP_207371.1">
    <property type="nucleotide sequence ID" value="NC_000915.1"/>
</dbReference>
<dbReference type="RefSeq" id="WP_000670710.1">
    <property type="nucleotide sequence ID" value="NC_018939.1"/>
</dbReference>
<dbReference type="SMR" id="O25300"/>
<dbReference type="FunCoup" id="O25300">
    <property type="interactions" value="231"/>
</dbReference>
<dbReference type="IntAct" id="O25300">
    <property type="interactions" value="2"/>
</dbReference>
<dbReference type="STRING" id="85962.HP_0576"/>
<dbReference type="PaxDb" id="85962-C694_02970"/>
<dbReference type="EnsemblBacteria" id="AAD07643">
    <property type="protein sequence ID" value="AAD07643"/>
    <property type="gene ID" value="HP_0576"/>
</dbReference>
<dbReference type="KEGG" id="heo:C694_02970"/>
<dbReference type="KEGG" id="hpy:HP_0576"/>
<dbReference type="PATRIC" id="fig|85962.47.peg.621"/>
<dbReference type="eggNOG" id="COG0681">
    <property type="taxonomic scope" value="Bacteria"/>
</dbReference>
<dbReference type="InParanoid" id="O25300"/>
<dbReference type="OrthoDB" id="9815782at2"/>
<dbReference type="PhylomeDB" id="O25300"/>
<dbReference type="Proteomes" id="UP000000429">
    <property type="component" value="Chromosome"/>
</dbReference>
<dbReference type="GO" id="GO:0005886">
    <property type="term" value="C:plasma membrane"/>
    <property type="evidence" value="ECO:0000318"/>
    <property type="project" value="GO_Central"/>
</dbReference>
<dbReference type="GO" id="GO:0004252">
    <property type="term" value="F:serine-type endopeptidase activity"/>
    <property type="evidence" value="ECO:0000318"/>
    <property type="project" value="GO_Central"/>
</dbReference>
<dbReference type="GO" id="GO:0006465">
    <property type="term" value="P:signal peptide processing"/>
    <property type="evidence" value="ECO:0000318"/>
    <property type="project" value="GO_Central"/>
</dbReference>
<dbReference type="CDD" id="cd06530">
    <property type="entry name" value="S26_SPase_I"/>
    <property type="match status" value="1"/>
</dbReference>
<dbReference type="Gene3D" id="2.10.109.10">
    <property type="entry name" value="Umud Fragment, subunit A"/>
    <property type="match status" value="1"/>
</dbReference>
<dbReference type="InterPro" id="IPR036286">
    <property type="entry name" value="LexA/Signal_pep-like_sf"/>
</dbReference>
<dbReference type="InterPro" id="IPR000223">
    <property type="entry name" value="Pept_S26A_signal_pept_1"/>
</dbReference>
<dbReference type="InterPro" id="IPR019758">
    <property type="entry name" value="Pept_S26A_signal_pept_1_CS"/>
</dbReference>
<dbReference type="InterPro" id="IPR019533">
    <property type="entry name" value="Peptidase_S26"/>
</dbReference>
<dbReference type="NCBIfam" id="TIGR02227">
    <property type="entry name" value="sigpep_I_bact"/>
    <property type="match status" value="1"/>
</dbReference>
<dbReference type="PANTHER" id="PTHR43390:SF1">
    <property type="entry name" value="CHLOROPLAST PROCESSING PEPTIDASE"/>
    <property type="match status" value="1"/>
</dbReference>
<dbReference type="PANTHER" id="PTHR43390">
    <property type="entry name" value="SIGNAL PEPTIDASE I"/>
    <property type="match status" value="1"/>
</dbReference>
<dbReference type="Pfam" id="PF10502">
    <property type="entry name" value="Peptidase_S26"/>
    <property type="match status" value="1"/>
</dbReference>
<dbReference type="PRINTS" id="PR00727">
    <property type="entry name" value="LEADERPTASE"/>
</dbReference>
<dbReference type="SUPFAM" id="SSF51306">
    <property type="entry name" value="LexA/Signal peptidase"/>
    <property type="match status" value="1"/>
</dbReference>
<dbReference type="PROSITE" id="PS00761">
    <property type="entry name" value="SPASE_I_3"/>
    <property type="match status" value="1"/>
</dbReference>
<evidence type="ECO:0000250" key="1"/>
<evidence type="ECO:0000255" key="2"/>
<evidence type="ECO:0000305" key="3"/>
<organism>
    <name type="scientific">Helicobacter pylori (strain ATCC 700392 / 26695)</name>
    <name type="common">Campylobacter pylori</name>
    <dbReference type="NCBI Taxonomy" id="85962"/>
    <lineage>
        <taxon>Bacteria</taxon>
        <taxon>Pseudomonadati</taxon>
        <taxon>Campylobacterota</taxon>
        <taxon>Epsilonproteobacteria</taxon>
        <taxon>Campylobacterales</taxon>
        <taxon>Helicobacteraceae</taxon>
        <taxon>Helicobacter</taxon>
    </lineage>
</organism>
<comment type="catalytic activity">
    <reaction>
        <text>Cleavage of hydrophobic, N-terminal signal or leader sequences from secreted and periplasmic proteins.</text>
        <dbReference type="EC" id="3.4.21.89"/>
    </reaction>
</comment>
<comment type="subcellular location">
    <subcellularLocation>
        <location evidence="3">Cell membrane</location>
        <topology evidence="3">Single-pass type II membrane protein</topology>
    </subcellularLocation>
</comment>
<comment type="similarity">
    <text evidence="3">Belongs to the peptidase S26 family.</text>
</comment>
<feature type="chain" id="PRO_0000109508" description="Signal peptidase I">
    <location>
        <begin position="1"/>
        <end position="290"/>
    </location>
</feature>
<feature type="topological domain" description="Cytoplasmic" evidence="2">
    <location>
        <begin position="1"/>
        <end position="13"/>
    </location>
</feature>
<feature type="transmembrane region" description="Helical" evidence="2">
    <location>
        <begin position="14"/>
        <end position="34"/>
    </location>
</feature>
<feature type="topological domain" description="Extracellular" evidence="2">
    <location>
        <begin position="35"/>
        <end position="290"/>
    </location>
</feature>
<feature type="active site" evidence="1">
    <location>
        <position position="38"/>
    </location>
</feature>
<feature type="active site" evidence="1">
    <location>
        <position position="106"/>
    </location>
</feature>
<keyword id="KW-1003">Cell membrane</keyword>
<keyword id="KW-0378">Hydrolase</keyword>
<keyword id="KW-0472">Membrane</keyword>
<keyword id="KW-0645">Protease</keyword>
<keyword id="KW-1185">Reference proteome</keyword>
<keyword id="KW-0812">Transmembrane</keyword>
<keyword id="KW-1133">Transmembrane helix</keyword>